<comment type="function">
    <text evidence="2 3">Probable secreted lin-12/Notch ligand or co-ligand involved in the mediation of Notch signaling (PubMed:18700817, PubMed:21549604). Involved in the lin-12/Notch pathway signaling of cell fate in vulval precursor cells (VPCs), acting redundantly with dsl-1 and lag-2 (PubMed:18700817). Required for normal octanol avoidance response, acting via both lin-12/Notch and glp-1/Notch signaling pathways in neurons, in concert with lag-2 (PubMed:21549604). Involved in regulation of sleep-like quiescence during the larval to adult transition, acting via Notch receptor activation and in parallel with EGF signaling (PubMed:21549604).</text>
</comment>
<comment type="subunit">
    <text evidence="2">May interact with lin-12/Notch receptor.</text>
</comment>
<comment type="subcellular location">
    <subcellularLocation>
        <location evidence="2">Apical cell membrane</location>
        <topology evidence="2">Peripheral membrane protein</topology>
    </subcellularLocation>
    <text evidence="2">Concentrated on the apical surface of vulval precursor cells.</text>
</comment>
<comment type="tissue specificity">
    <text evidence="3">Expressed in coelomocytes (at protein level).</text>
</comment>
<comment type="developmental stage">
    <text evidence="2">Expressed in VPCs and hypodermal cells during larval development (PubMed:18700817). Expressed in VPCs of L3 stage larvae prior to and during cell fate specification and in the seam cells of L1 stage larvae and adult animals (at protein level) (PubMed:18700817). Expressed in developing uterus of L4 stage larvae and in the spermatheca (at protein level) (PubMed:18700817).</text>
</comment>
<comment type="disruption phenotype">
    <text evidence="2 3">RNAi-mediated knockdown causes moderately abnormal vulval development (PubMed:18700817). RNAi-mediated knockdown causes defects in octanol response (PubMed:21549604).</text>
</comment>
<reference evidence="5" key="1">
    <citation type="journal article" date="1998" name="Science">
        <title>Genome sequence of the nematode C. elegans: a platform for investigating biology.</title>
        <authorList>
            <consortium name="The C. elegans sequencing consortium"/>
        </authorList>
    </citation>
    <scope>NUCLEOTIDE SEQUENCE [LARGE SCALE GENOMIC DNA]</scope>
    <source>
        <strain evidence="5">Bristol N2</strain>
    </source>
</reference>
<reference key="2">
    <citation type="journal article" date="2008" name="PLoS Biol.">
        <title>OSM-11 facilitates LIN-12 Notch signaling during Caenorhabditis elegans vulval development.</title>
        <authorList>
            <person name="Komatsu H."/>
            <person name="Chao M.Y."/>
            <person name="Larkins-Ford J."/>
            <person name="Corkins M.E."/>
            <person name="Somers G.A."/>
            <person name="Tucey T."/>
            <person name="Dionne H.M."/>
            <person name="White J.Q."/>
            <person name="Wani K."/>
            <person name="Boxem M."/>
            <person name="Hart A.C."/>
        </authorList>
    </citation>
    <scope>FUNCTION</scope>
    <scope>INTERACTION WITH LIN-12</scope>
    <scope>SUBCELLULAR LOCATION</scope>
    <scope>DEVELOPMENTAL STAGE</scope>
    <scope>DISRUPTION PHENOTYPE</scope>
</reference>
<reference key="3">
    <citation type="journal article" date="2011" name="Curr. Biol.">
        <title>C. elegans Notch signaling regulates adult chemosensory response and larval molting quiescence.</title>
        <authorList>
            <person name="Singh K."/>
            <person name="Chao M.Y."/>
            <person name="Somers G.A."/>
            <person name="Komatsu H."/>
            <person name="Corkins M.E."/>
            <person name="Larkins-Ford J."/>
            <person name="Tucey T."/>
            <person name="Dionne H.M."/>
            <person name="Walsh M.B."/>
            <person name="Beaumont E.K."/>
            <person name="Hart D.P."/>
            <person name="Lockery S.R."/>
            <person name="Hart A.C."/>
        </authorList>
    </citation>
    <scope>FUNCTION</scope>
    <scope>TISSUE SPECIFICITY</scope>
    <scope>DISRUPTION PHENOTYPE</scope>
</reference>
<feature type="signal peptide" evidence="1">
    <location>
        <begin position="1"/>
        <end position="18"/>
    </location>
</feature>
<feature type="chain" id="PRO_5004158500" description="Notch ligand osm-11" evidence="1">
    <location>
        <begin position="19"/>
        <end position="189"/>
    </location>
</feature>
<organism evidence="5">
    <name type="scientific">Caenorhabditis elegans</name>
    <dbReference type="NCBI Taxonomy" id="6239"/>
    <lineage>
        <taxon>Eukaryota</taxon>
        <taxon>Metazoa</taxon>
        <taxon>Ecdysozoa</taxon>
        <taxon>Nematoda</taxon>
        <taxon>Chromadorea</taxon>
        <taxon>Rhabditida</taxon>
        <taxon>Rhabditina</taxon>
        <taxon>Rhabditomorpha</taxon>
        <taxon>Rhabditoidea</taxon>
        <taxon>Rhabditidae</taxon>
        <taxon>Peloderinae</taxon>
        <taxon>Caenorhabditis</taxon>
    </lineage>
</organism>
<protein>
    <recommendedName>
        <fullName evidence="4">Notch ligand osm-11</fullName>
    </recommendedName>
    <alternativeName>
        <fullName evidence="6">Osmotic avoidance abnormal protein 11</fullName>
    </alternativeName>
</protein>
<gene>
    <name evidence="6" type="primary">osm-11</name>
    <name evidence="6" type="ORF">F11C7.5</name>
</gene>
<keyword id="KW-1003">Cell membrane</keyword>
<keyword id="KW-0217">Developmental protein</keyword>
<keyword id="KW-0472">Membrane</keyword>
<keyword id="KW-0914">Notch signaling pathway</keyword>
<keyword id="KW-1185">Reference proteome</keyword>
<keyword id="KW-0732">Signal</keyword>
<accession>O45346</accession>
<dbReference type="EMBL" id="BX284606">
    <property type="protein sequence ID" value="CCD66914.1"/>
    <property type="molecule type" value="Genomic_DNA"/>
</dbReference>
<dbReference type="PIR" id="F89753">
    <property type="entry name" value="F89753"/>
</dbReference>
<dbReference type="RefSeq" id="NP_510823.1">
    <property type="nucleotide sequence ID" value="NM_078422.9"/>
</dbReference>
<dbReference type="DIP" id="DIP-46050N"/>
<dbReference type="FunCoup" id="O45346">
    <property type="interactions" value="322"/>
</dbReference>
<dbReference type="IntAct" id="O45346">
    <property type="interactions" value="2"/>
</dbReference>
<dbReference type="STRING" id="6239.F11C7.5.1"/>
<dbReference type="PaxDb" id="6239-F11C7.5"/>
<dbReference type="PeptideAtlas" id="O45346"/>
<dbReference type="EnsemblMetazoa" id="F11C7.5.1">
    <property type="protein sequence ID" value="F11C7.5.1"/>
    <property type="gene ID" value="WBGene00003891"/>
</dbReference>
<dbReference type="EnsemblMetazoa" id="F11C7.5.2">
    <property type="protein sequence ID" value="F11C7.5.2"/>
    <property type="gene ID" value="WBGene00003891"/>
</dbReference>
<dbReference type="GeneID" id="181772"/>
<dbReference type="KEGG" id="cel:CELE_F11C7.5"/>
<dbReference type="UCSC" id="F11C7.5">
    <property type="organism name" value="c. elegans"/>
</dbReference>
<dbReference type="AGR" id="WB:WBGene00003891"/>
<dbReference type="CTD" id="181772"/>
<dbReference type="WormBase" id="F11C7.5">
    <property type="protein sequence ID" value="CE17657"/>
    <property type="gene ID" value="WBGene00003891"/>
    <property type="gene designation" value="osm-11"/>
</dbReference>
<dbReference type="eggNOG" id="ENOG502TFHE">
    <property type="taxonomic scope" value="Eukaryota"/>
</dbReference>
<dbReference type="HOGENOM" id="CLU_1429188_0_0_1"/>
<dbReference type="InParanoid" id="O45346"/>
<dbReference type="OMA" id="KFCPAYE"/>
<dbReference type="OrthoDB" id="5774669at2759"/>
<dbReference type="PhylomeDB" id="O45346"/>
<dbReference type="PRO" id="PR:O45346"/>
<dbReference type="Proteomes" id="UP000001940">
    <property type="component" value="Chromosome X"/>
</dbReference>
<dbReference type="Bgee" id="WBGene00003891">
    <property type="expression patterns" value="Expressed in adult organism and 4 other cell types or tissues"/>
</dbReference>
<dbReference type="GO" id="GO:0045177">
    <property type="term" value="C:apical part of cell"/>
    <property type="evidence" value="ECO:0000314"/>
    <property type="project" value="WormBase"/>
</dbReference>
<dbReference type="GO" id="GO:0016324">
    <property type="term" value="C:apical plasma membrane"/>
    <property type="evidence" value="ECO:0007669"/>
    <property type="project" value="UniProtKB-SubCell"/>
</dbReference>
<dbReference type="GO" id="GO:0005615">
    <property type="term" value="C:extracellular space"/>
    <property type="evidence" value="ECO:0000314"/>
    <property type="project" value="WormBase"/>
</dbReference>
<dbReference type="GO" id="GO:0005112">
    <property type="term" value="F:Notch binding"/>
    <property type="evidence" value="ECO:0000353"/>
    <property type="project" value="WormBase"/>
</dbReference>
<dbReference type="GO" id="GO:0001708">
    <property type="term" value="P:cell fate specification"/>
    <property type="evidence" value="ECO:0000315"/>
    <property type="project" value="WormBase"/>
</dbReference>
<dbReference type="GO" id="GO:0007219">
    <property type="term" value="P:Notch signaling pathway"/>
    <property type="evidence" value="ECO:0007669"/>
    <property type="project" value="UniProtKB-KW"/>
</dbReference>
<dbReference type="GO" id="GO:0045747">
    <property type="term" value="P:positive regulation of Notch signaling pathway"/>
    <property type="evidence" value="ECO:0000316"/>
    <property type="project" value="WormBase"/>
</dbReference>
<dbReference type="GO" id="GO:0010468">
    <property type="term" value="P:regulation of gene expression"/>
    <property type="evidence" value="ECO:0000315"/>
    <property type="project" value="UniProtKB"/>
</dbReference>
<dbReference type="GO" id="GO:0006970">
    <property type="term" value="P:response to osmotic stress"/>
    <property type="evidence" value="ECO:0000315"/>
    <property type="project" value="WormBase"/>
</dbReference>
<dbReference type="GO" id="GO:0040025">
    <property type="term" value="P:vulval development"/>
    <property type="evidence" value="ECO:0000315"/>
    <property type="project" value="WormBase"/>
</dbReference>
<dbReference type="InterPro" id="IPR053124">
    <property type="entry name" value="Notch_signaling_modulators"/>
</dbReference>
<dbReference type="PANTHER" id="PTHR35015:SF1">
    <property type="entry name" value="NOTCH LIGAND OSM-11"/>
    <property type="match status" value="1"/>
</dbReference>
<dbReference type="PANTHER" id="PTHR35015">
    <property type="entry name" value="PROTEIN CBR-OSM-7-RELATED"/>
    <property type="match status" value="1"/>
</dbReference>
<sequence length="189" mass="20729">MNFITVAALAIVMVLAQANPARVRRNEEMSERYCIKHLDHYNKYCGDNAGPIDRALFGKVAKFCPAYEKHCAVGKAGLVELPDLGSPLVMPPVLPRGSDFASLDLPIADERKPAHIHSSRTAPQTTRLTAAIVATCTPECTAAHCTDECKCAHTHPKVHQMCNPPSSAAMAETCQRWYSKCTMFTPVQY</sequence>
<proteinExistence type="evidence at protein level"/>
<evidence type="ECO:0000255" key="1"/>
<evidence type="ECO:0000269" key="2">
    <source>
    </source>
</evidence>
<evidence type="ECO:0000269" key="3">
    <source>
    </source>
</evidence>
<evidence type="ECO:0000303" key="4">
    <source>
    </source>
</evidence>
<evidence type="ECO:0000312" key="5">
    <source>
        <dbReference type="Proteomes" id="UP000001940"/>
    </source>
</evidence>
<evidence type="ECO:0000312" key="6">
    <source>
        <dbReference type="WormBase" id="F11C7.5"/>
    </source>
</evidence>
<name>OSM11_CAEEL</name>